<reference key="1">
    <citation type="journal article" date="2002" name="Proc. Natl. Acad. Sci. U.S.A.">
        <title>Genome sequence and comparative microarray analysis of serotype M18 group A Streptococcus strains associated with acute rheumatic fever outbreaks.</title>
        <authorList>
            <person name="Smoot J.C."/>
            <person name="Barbian K.D."/>
            <person name="Van Gompel J.J."/>
            <person name="Smoot L.M."/>
            <person name="Chaussee M.S."/>
            <person name="Sylva G.L."/>
            <person name="Sturdevant D.E."/>
            <person name="Ricklefs S.M."/>
            <person name="Porcella S.F."/>
            <person name="Parkins L.D."/>
            <person name="Beres S.B."/>
            <person name="Campbell D.S."/>
            <person name="Smith T.M."/>
            <person name="Zhang Q."/>
            <person name="Kapur V."/>
            <person name="Daly J.A."/>
            <person name="Veasy L.G."/>
            <person name="Musser J.M."/>
        </authorList>
    </citation>
    <scope>NUCLEOTIDE SEQUENCE [LARGE SCALE GENOMIC DNA]</scope>
    <source>
        <strain>MGAS8232</strain>
    </source>
</reference>
<comment type="function">
    <text evidence="2">Catalyzes the formation of N(7)-methylguanine at position 46 (m7G46) in tRNA.</text>
</comment>
<comment type="catalytic activity">
    <reaction evidence="2">
        <text>guanosine(46) in tRNA + S-adenosyl-L-methionine = N(7)-methylguanosine(46) in tRNA + S-adenosyl-L-homocysteine</text>
        <dbReference type="Rhea" id="RHEA:42708"/>
        <dbReference type="Rhea" id="RHEA-COMP:10188"/>
        <dbReference type="Rhea" id="RHEA-COMP:10189"/>
        <dbReference type="ChEBI" id="CHEBI:57856"/>
        <dbReference type="ChEBI" id="CHEBI:59789"/>
        <dbReference type="ChEBI" id="CHEBI:74269"/>
        <dbReference type="ChEBI" id="CHEBI:74480"/>
        <dbReference type="EC" id="2.1.1.33"/>
    </reaction>
</comment>
<comment type="pathway">
    <text evidence="2">tRNA modification; N(7)-methylguanine-tRNA biosynthesis.</text>
</comment>
<comment type="similarity">
    <text evidence="2">Belongs to the class I-like SAM-binding methyltransferase superfamily. TrmB family.</text>
</comment>
<protein>
    <recommendedName>
        <fullName evidence="2">tRNA (guanine-N(7)-)-methyltransferase</fullName>
        <ecNumber evidence="2">2.1.1.33</ecNumber>
    </recommendedName>
    <alternativeName>
        <fullName evidence="2">tRNA (guanine(46)-N(7))-methyltransferase</fullName>
    </alternativeName>
    <alternativeName>
        <fullName evidence="2">tRNA(m7G46)-methyltransferase</fullName>
    </alternativeName>
</protein>
<evidence type="ECO:0000250" key="1"/>
<evidence type="ECO:0000255" key="2">
    <source>
        <dbReference type="HAMAP-Rule" id="MF_01057"/>
    </source>
</evidence>
<dbReference type="EC" id="2.1.1.33" evidence="2"/>
<dbReference type="EMBL" id="AE009949">
    <property type="protein sequence ID" value="AAL98263.1"/>
    <property type="molecule type" value="Genomic_DNA"/>
</dbReference>
<dbReference type="RefSeq" id="WP_011018101.1">
    <property type="nucleotide sequence ID" value="NC_003485.1"/>
</dbReference>
<dbReference type="SMR" id="Q8NZU4"/>
<dbReference type="KEGG" id="spm:spyM18_1734"/>
<dbReference type="HOGENOM" id="CLU_050910_2_1_9"/>
<dbReference type="UniPathway" id="UPA00989"/>
<dbReference type="GO" id="GO:0043527">
    <property type="term" value="C:tRNA methyltransferase complex"/>
    <property type="evidence" value="ECO:0007669"/>
    <property type="project" value="TreeGrafter"/>
</dbReference>
<dbReference type="GO" id="GO:0008176">
    <property type="term" value="F:tRNA (guanine(46)-N7)-methyltransferase activity"/>
    <property type="evidence" value="ECO:0007669"/>
    <property type="project" value="UniProtKB-UniRule"/>
</dbReference>
<dbReference type="CDD" id="cd02440">
    <property type="entry name" value="AdoMet_MTases"/>
    <property type="match status" value="1"/>
</dbReference>
<dbReference type="FunFam" id="3.40.50.150:FF:000035">
    <property type="entry name" value="tRNA (guanine-N(7)-)-methyltransferase"/>
    <property type="match status" value="1"/>
</dbReference>
<dbReference type="Gene3D" id="3.40.50.150">
    <property type="entry name" value="Vaccinia Virus protein VP39"/>
    <property type="match status" value="1"/>
</dbReference>
<dbReference type="HAMAP" id="MF_01057">
    <property type="entry name" value="tRNA_methyltr_TrmB"/>
    <property type="match status" value="1"/>
</dbReference>
<dbReference type="InterPro" id="IPR029063">
    <property type="entry name" value="SAM-dependent_MTases_sf"/>
</dbReference>
<dbReference type="InterPro" id="IPR003358">
    <property type="entry name" value="tRNA_(Gua-N-7)_MeTrfase_Trmb"/>
</dbReference>
<dbReference type="InterPro" id="IPR055361">
    <property type="entry name" value="tRNA_methyltr_TrmB_bact"/>
</dbReference>
<dbReference type="NCBIfam" id="NF001080">
    <property type="entry name" value="PRK00121.2-2"/>
    <property type="match status" value="1"/>
</dbReference>
<dbReference type="NCBIfam" id="TIGR00091">
    <property type="entry name" value="tRNA (guanosine(46)-N7)-methyltransferase TrmB"/>
    <property type="match status" value="1"/>
</dbReference>
<dbReference type="PANTHER" id="PTHR23417">
    <property type="entry name" value="3-DEOXY-D-MANNO-OCTULOSONIC-ACID TRANSFERASE/TRNA GUANINE-N 7 - -METHYLTRANSFERASE"/>
    <property type="match status" value="1"/>
</dbReference>
<dbReference type="PANTHER" id="PTHR23417:SF14">
    <property type="entry name" value="PENTACOTRIPEPTIDE-REPEAT REGION OF PRORP DOMAIN-CONTAINING PROTEIN"/>
    <property type="match status" value="1"/>
</dbReference>
<dbReference type="Pfam" id="PF02390">
    <property type="entry name" value="Methyltransf_4"/>
    <property type="match status" value="1"/>
</dbReference>
<dbReference type="SUPFAM" id="SSF53335">
    <property type="entry name" value="S-adenosyl-L-methionine-dependent methyltransferases"/>
    <property type="match status" value="1"/>
</dbReference>
<dbReference type="PROSITE" id="PS51625">
    <property type="entry name" value="SAM_MT_TRMB"/>
    <property type="match status" value="1"/>
</dbReference>
<gene>
    <name evidence="2" type="primary">trmB</name>
    <name type="ordered locus">spyM18_1734</name>
</gene>
<keyword id="KW-0489">Methyltransferase</keyword>
<keyword id="KW-0949">S-adenosyl-L-methionine</keyword>
<keyword id="KW-0808">Transferase</keyword>
<keyword id="KW-0819">tRNA processing</keyword>
<sequence>MRVRKRKGAEKHLANNPHYVILNPEDAKGRWHDVFGNDRPIHIEVGSGKGGFITGMALKNPDINYIGIDIQLSVLSYALDKVLASEVPNVKLLRVDGSSLTNYFEDGEVDMMYLNFSDPWPKTKHEKRRLTYKDFLDTYKRILPEHGEIHFKTDNRGLFEYSLASFSQYGMTLRQIWLDLHASNYEGNVMTEYEEKFSNKGQVIYRVEANF</sequence>
<accession>Q8NZU4</accession>
<organism>
    <name type="scientific">Streptococcus pyogenes serotype M18 (strain MGAS8232)</name>
    <dbReference type="NCBI Taxonomy" id="186103"/>
    <lineage>
        <taxon>Bacteria</taxon>
        <taxon>Bacillati</taxon>
        <taxon>Bacillota</taxon>
        <taxon>Bacilli</taxon>
        <taxon>Lactobacillales</taxon>
        <taxon>Streptococcaceae</taxon>
        <taxon>Streptococcus</taxon>
    </lineage>
</organism>
<proteinExistence type="inferred from homology"/>
<feature type="chain" id="PRO_0000171408" description="tRNA (guanine-N(7)-)-methyltransferase">
    <location>
        <begin position="1"/>
        <end position="211"/>
    </location>
</feature>
<feature type="region of interest" description="Interaction with RNA" evidence="2">
    <location>
        <begin position="124"/>
        <end position="129"/>
    </location>
</feature>
<feature type="active site" evidence="1">
    <location>
        <position position="118"/>
    </location>
</feature>
<feature type="binding site" evidence="2">
    <location>
        <position position="44"/>
    </location>
    <ligand>
        <name>S-adenosyl-L-methionine</name>
        <dbReference type="ChEBI" id="CHEBI:59789"/>
    </ligand>
</feature>
<feature type="binding site" evidence="2">
    <location>
        <position position="69"/>
    </location>
    <ligand>
        <name>S-adenosyl-L-methionine</name>
        <dbReference type="ChEBI" id="CHEBI:59789"/>
    </ligand>
</feature>
<feature type="binding site" evidence="2">
    <location>
        <position position="96"/>
    </location>
    <ligand>
        <name>S-adenosyl-L-methionine</name>
        <dbReference type="ChEBI" id="CHEBI:59789"/>
    </ligand>
</feature>
<feature type="binding site" evidence="2">
    <location>
        <position position="118"/>
    </location>
    <ligand>
        <name>S-adenosyl-L-methionine</name>
        <dbReference type="ChEBI" id="CHEBI:59789"/>
    </ligand>
</feature>
<feature type="binding site" evidence="2">
    <location>
        <position position="122"/>
    </location>
    <ligand>
        <name>substrate</name>
    </ligand>
</feature>
<feature type="binding site" evidence="2">
    <location>
        <position position="154"/>
    </location>
    <ligand>
        <name>substrate</name>
    </ligand>
</feature>
<feature type="binding site" evidence="2">
    <location>
        <begin position="191"/>
        <end position="194"/>
    </location>
    <ligand>
        <name>substrate</name>
    </ligand>
</feature>
<name>TRMB_STRP8</name>